<evidence type="ECO:0000255" key="1">
    <source>
        <dbReference type="HAMAP-Rule" id="MF_01315"/>
    </source>
</evidence>
<evidence type="ECO:0000256" key="2">
    <source>
        <dbReference type="SAM" id="MobiDB-lite"/>
    </source>
</evidence>
<evidence type="ECO:0000305" key="3"/>
<organism>
    <name type="scientific">Yersinia pseudotuberculosis serotype IB (strain PB1/+)</name>
    <dbReference type="NCBI Taxonomy" id="502801"/>
    <lineage>
        <taxon>Bacteria</taxon>
        <taxon>Pseudomonadati</taxon>
        <taxon>Pseudomonadota</taxon>
        <taxon>Gammaproteobacteria</taxon>
        <taxon>Enterobacterales</taxon>
        <taxon>Yersiniaceae</taxon>
        <taxon>Yersinia</taxon>
    </lineage>
</organism>
<protein>
    <recommendedName>
        <fullName evidence="1">Small ribosomal subunit protein uS13</fullName>
    </recommendedName>
    <alternativeName>
        <fullName evidence="3">30S ribosomal protein S13</fullName>
    </alternativeName>
</protein>
<keyword id="KW-0687">Ribonucleoprotein</keyword>
<keyword id="KW-0689">Ribosomal protein</keyword>
<keyword id="KW-0694">RNA-binding</keyword>
<keyword id="KW-0699">rRNA-binding</keyword>
<keyword id="KW-0820">tRNA-binding</keyword>
<comment type="function">
    <text evidence="1">Located at the top of the head of the 30S subunit, it contacts several helices of the 16S rRNA. In the 70S ribosome it contacts the 23S rRNA (bridge B1a) and protein L5 of the 50S subunit (bridge B1b), connecting the 2 subunits; these bridges are implicated in subunit movement. Contacts the tRNAs in the A and P-sites.</text>
</comment>
<comment type="subunit">
    <text evidence="1">Part of the 30S ribosomal subunit. Forms a loose heterodimer with protein S19. Forms two bridges to the 50S subunit in the 70S ribosome.</text>
</comment>
<comment type="similarity">
    <text evidence="1">Belongs to the universal ribosomal protein uS13 family.</text>
</comment>
<name>RS13_YERPB</name>
<accession>B2K515</accession>
<dbReference type="EMBL" id="CP001048">
    <property type="protein sequence ID" value="ACC90817.1"/>
    <property type="molecule type" value="Genomic_DNA"/>
</dbReference>
<dbReference type="RefSeq" id="WP_002213346.1">
    <property type="nucleotide sequence ID" value="NZ_CP009780.1"/>
</dbReference>
<dbReference type="SMR" id="B2K515"/>
<dbReference type="GeneID" id="96663174"/>
<dbReference type="KEGG" id="ypb:YPTS_3868"/>
<dbReference type="PATRIC" id="fig|502801.10.peg.3333"/>
<dbReference type="GO" id="GO:0005829">
    <property type="term" value="C:cytosol"/>
    <property type="evidence" value="ECO:0007669"/>
    <property type="project" value="TreeGrafter"/>
</dbReference>
<dbReference type="GO" id="GO:0015935">
    <property type="term" value="C:small ribosomal subunit"/>
    <property type="evidence" value="ECO:0007669"/>
    <property type="project" value="TreeGrafter"/>
</dbReference>
<dbReference type="GO" id="GO:0019843">
    <property type="term" value="F:rRNA binding"/>
    <property type="evidence" value="ECO:0007669"/>
    <property type="project" value="UniProtKB-UniRule"/>
</dbReference>
<dbReference type="GO" id="GO:0003735">
    <property type="term" value="F:structural constituent of ribosome"/>
    <property type="evidence" value="ECO:0007669"/>
    <property type="project" value="InterPro"/>
</dbReference>
<dbReference type="GO" id="GO:0000049">
    <property type="term" value="F:tRNA binding"/>
    <property type="evidence" value="ECO:0007669"/>
    <property type="project" value="UniProtKB-UniRule"/>
</dbReference>
<dbReference type="GO" id="GO:0006412">
    <property type="term" value="P:translation"/>
    <property type="evidence" value="ECO:0007669"/>
    <property type="project" value="UniProtKB-UniRule"/>
</dbReference>
<dbReference type="FunFam" id="1.10.8.50:FF:000001">
    <property type="entry name" value="30S ribosomal protein S13"/>
    <property type="match status" value="1"/>
</dbReference>
<dbReference type="FunFam" id="4.10.910.10:FF:000001">
    <property type="entry name" value="30S ribosomal protein S13"/>
    <property type="match status" value="1"/>
</dbReference>
<dbReference type="Gene3D" id="1.10.8.50">
    <property type="match status" value="1"/>
</dbReference>
<dbReference type="Gene3D" id="4.10.910.10">
    <property type="entry name" value="30s ribosomal protein s13, domain 2"/>
    <property type="match status" value="1"/>
</dbReference>
<dbReference type="HAMAP" id="MF_01315">
    <property type="entry name" value="Ribosomal_uS13"/>
    <property type="match status" value="1"/>
</dbReference>
<dbReference type="InterPro" id="IPR027437">
    <property type="entry name" value="Rbsml_uS13_C"/>
</dbReference>
<dbReference type="InterPro" id="IPR001892">
    <property type="entry name" value="Ribosomal_uS13"/>
</dbReference>
<dbReference type="InterPro" id="IPR010979">
    <property type="entry name" value="Ribosomal_uS13-like_H2TH"/>
</dbReference>
<dbReference type="InterPro" id="IPR019980">
    <property type="entry name" value="Ribosomal_uS13_bac-type"/>
</dbReference>
<dbReference type="InterPro" id="IPR018269">
    <property type="entry name" value="Ribosomal_uS13_CS"/>
</dbReference>
<dbReference type="NCBIfam" id="TIGR03631">
    <property type="entry name" value="uS13_bact"/>
    <property type="match status" value="1"/>
</dbReference>
<dbReference type="PANTHER" id="PTHR10871">
    <property type="entry name" value="30S RIBOSOMAL PROTEIN S13/40S RIBOSOMAL PROTEIN S18"/>
    <property type="match status" value="1"/>
</dbReference>
<dbReference type="PANTHER" id="PTHR10871:SF1">
    <property type="entry name" value="SMALL RIBOSOMAL SUBUNIT PROTEIN US13M"/>
    <property type="match status" value="1"/>
</dbReference>
<dbReference type="Pfam" id="PF00416">
    <property type="entry name" value="Ribosomal_S13"/>
    <property type="match status" value="1"/>
</dbReference>
<dbReference type="PIRSF" id="PIRSF002134">
    <property type="entry name" value="Ribosomal_S13"/>
    <property type="match status" value="1"/>
</dbReference>
<dbReference type="SUPFAM" id="SSF46946">
    <property type="entry name" value="S13-like H2TH domain"/>
    <property type="match status" value="1"/>
</dbReference>
<dbReference type="PROSITE" id="PS00646">
    <property type="entry name" value="RIBOSOMAL_S13_1"/>
    <property type="match status" value="1"/>
</dbReference>
<dbReference type="PROSITE" id="PS50159">
    <property type="entry name" value="RIBOSOMAL_S13_2"/>
    <property type="match status" value="1"/>
</dbReference>
<feature type="chain" id="PRO_1000141334" description="Small ribosomal subunit protein uS13">
    <location>
        <begin position="1"/>
        <end position="118"/>
    </location>
</feature>
<feature type="region of interest" description="Disordered" evidence="2">
    <location>
        <begin position="92"/>
        <end position="118"/>
    </location>
</feature>
<gene>
    <name evidence="1" type="primary">rpsM</name>
    <name type="ordered locus">YPTS_3868</name>
</gene>
<proteinExistence type="inferred from homology"/>
<sequence length="118" mass="13252">MARIAGINIPDQKHTVIALTAIFGIGKTRSQAICVAAGIAEHVKISELSEEQIEKLRDEVAKYVVEGDLRREVTLSIKRLMDLGTYRGLRHRRGLPVRGQRTKTNARTRKGPRKPIKK</sequence>
<reference key="1">
    <citation type="submission" date="2008-04" db="EMBL/GenBank/DDBJ databases">
        <title>Complete sequence of Yersinia pseudotuberculosis PB1/+.</title>
        <authorList>
            <person name="Copeland A."/>
            <person name="Lucas S."/>
            <person name="Lapidus A."/>
            <person name="Glavina del Rio T."/>
            <person name="Dalin E."/>
            <person name="Tice H."/>
            <person name="Bruce D."/>
            <person name="Goodwin L."/>
            <person name="Pitluck S."/>
            <person name="Munk A.C."/>
            <person name="Brettin T."/>
            <person name="Detter J.C."/>
            <person name="Han C."/>
            <person name="Tapia R."/>
            <person name="Schmutz J."/>
            <person name="Larimer F."/>
            <person name="Land M."/>
            <person name="Hauser L."/>
            <person name="Challacombe J.F."/>
            <person name="Green L."/>
            <person name="Lindler L.E."/>
            <person name="Nikolich M.P."/>
            <person name="Richardson P."/>
        </authorList>
    </citation>
    <scope>NUCLEOTIDE SEQUENCE [LARGE SCALE GENOMIC DNA]</scope>
    <source>
        <strain>PB1/+</strain>
    </source>
</reference>